<reference key="1">
    <citation type="journal article" date="1995" name="DNA Res.">
        <title>Sequence analysis of the genome of the unicellular cyanobacterium Synechocystis sp. strain PCC6803. I. Sequence features in the 1 Mb region from map positions 64% to 92% of the genome.</title>
        <authorList>
            <person name="Kaneko T."/>
            <person name="Tanaka A."/>
            <person name="Sato S."/>
            <person name="Kotani H."/>
            <person name="Sazuka T."/>
            <person name="Miyajima N."/>
            <person name="Sugiura M."/>
            <person name="Tabata S."/>
        </authorList>
    </citation>
    <scope>NUCLEOTIDE SEQUENCE [LARGE SCALE GENOMIC DNA]</scope>
    <source>
        <strain>ATCC 27184 / PCC 6803 / N-1</strain>
    </source>
</reference>
<reference key="2">
    <citation type="journal article" date="1996" name="DNA Res.">
        <title>Sequence analysis of the genome of the unicellular cyanobacterium Synechocystis sp. strain PCC6803. II. Sequence determination of the entire genome and assignment of potential protein-coding regions.</title>
        <authorList>
            <person name="Kaneko T."/>
            <person name="Sato S."/>
            <person name="Kotani H."/>
            <person name="Tanaka A."/>
            <person name="Asamizu E."/>
            <person name="Nakamura Y."/>
            <person name="Miyajima N."/>
            <person name="Hirosawa M."/>
            <person name="Sugiura M."/>
            <person name="Sasamoto S."/>
            <person name="Kimura T."/>
            <person name="Hosouchi T."/>
            <person name="Matsuno A."/>
            <person name="Muraki A."/>
            <person name="Nakazaki N."/>
            <person name="Naruo K."/>
            <person name="Okumura S."/>
            <person name="Shimpo S."/>
            <person name="Takeuchi C."/>
            <person name="Wada T."/>
            <person name="Watanabe A."/>
            <person name="Yamada M."/>
            <person name="Yasuda M."/>
            <person name="Tabata S."/>
        </authorList>
    </citation>
    <scope>NUCLEOTIDE SEQUENCE [LARGE SCALE GENOMIC DNA]</scope>
    <source>
        <strain>ATCC 27184 / PCC 6803 / Kazusa</strain>
    </source>
</reference>
<protein>
    <recommendedName>
        <fullName>Probable branched-chain-amino-acid aminotransferase</fullName>
        <shortName>BCAT</shortName>
        <ecNumber>2.6.1.42</ecNumber>
    </recommendedName>
</protein>
<organism>
    <name type="scientific">Synechocystis sp. (strain ATCC 27184 / PCC 6803 / Kazusa)</name>
    <dbReference type="NCBI Taxonomy" id="1111708"/>
    <lineage>
        <taxon>Bacteria</taxon>
        <taxon>Bacillati</taxon>
        <taxon>Cyanobacteriota</taxon>
        <taxon>Cyanophyceae</taxon>
        <taxon>Synechococcales</taxon>
        <taxon>Merismopediaceae</taxon>
        <taxon>Synechocystis</taxon>
    </lineage>
</organism>
<sequence length="305" mass="33951">MHKFLPIAYFEDKFVPFEDAKISVATHALHYGTAAFGGLRGIPDPEDPGTILLFRLDRHGDRLSKSAKFLHYDISAEKIKEVIVDFVKKNQPDKSFYIRPLVYSSGLGIAPRLHNLEKDFLVYGLEMGDYLAADGVSCRISSWYRQEDRSFPLRGKISAAYITSALAKTEAVESGFDEAILMNSQGKVCEATGMNVFMVRNGQIVTPGNEQDILEGITRDSILTIAADLGIPTCQRPIDKSELMIADEVFLSGTAAKITPVKRIENFTLGGDRPITEKLRSVLTAVTENREPKYQDWVFKIPLNG</sequence>
<evidence type="ECO:0000250" key="1"/>
<evidence type="ECO:0000305" key="2"/>
<accession>P54691</accession>
<name>ILVE_SYNY3</name>
<feature type="chain" id="PRO_0000103286" description="Probable branched-chain-amino-acid aminotransferase">
    <location>
        <begin position="1"/>
        <end position="305"/>
    </location>
</feature>
<feature type="modified residue" description="N6-(pyridoxal phosphate)lysine" evidence="1">
    <location>
        <position position="156"/>
    </location>
</feature>
<keyword id="KW-0028">Amino-acid biosynthesis</keyword>
<keyword id="KW-0032">Aminotransferase</keyword>
<keyword id="KW-0100">Branched-chain amino acid biosynthesis</keyword>
<keyword id="KW-0663">Pyridoxal phosphate</keyword>
<keyword id="KW-1185">Reference proteome</keyword>
<keyword id="KW-0808">Transferase</keyword>
<comment type="function">
    <text evidence="1">Acts on leucine, isoleucine and valine.</text>
</comment>
<comment type="catalytic activity">
    <reaction>
        <text>L-leucine + 2-oxoglutarate = 4-methyl-2-oxopentanoate + L-glutamate</text>
        <dbReference type="Rhea" id="RHEA:18321"/>
        <dbReference type="ChEBI" id="CHEBI:16810"/>
        <dbReference type="ChEBI" id="CHEBI:17865"/>
        <dbReference type="ChEBI" id="CHEBI:29985"/>
        <dbReference type="ChEBI" id="CHEBI:57427"/>
        <dbReference type="EC" id="2.6.1.42"/>
    </reaction>
</comment>
<comment type="catalytic activity">
    <reaction>
        <text>L-isoleucine + 2-oxoglutarate = (S)-3-methyl-2-oxopentanoate + L-glutamate</text>
        <dbReference type="Rhea" id="RHEA:24801"/>
        <dbReference type="ChEBI" id="CHEBI:16810"/>
        <dbReference type="ChEBI" id="CHEBI:29985"/>
        <dbReference type="ChEBI" id="CHEBI:35146"/>
        <dbReference type="ChEBI" id="CHEBI:58045"/>
        <dbReference type="EC" id="2.6.1.42"/>
    </reaction>
</comment>
<comment type="catalytic activity">
    <reaction>
        <text>L-valine + 2-oxoglutarate = 3-methyl-2-oxobutanoate + L-glutamate</text>
        <dbReference type="Rhea" id="RHEA:24813"/>
        <dbReference type="ChEBI" id="CHEBI:11851"/>
        <dbReference type="ChEBI" id="CHEBI:16810"/>
        <dbReference type="ChEBI" id="CHEBI:29985"/>
        <dbReference type="ChEBI" id="CHEBI:57762"/>
        <dbReference type="EC" id="2.6.1.42"/>
    </reaction>
</comment>
<comment type="cofactor">
    <cofactor>
        <name>pyridoxal 5'-phosphate</name>
        <dbReference type="ChEBI" id="CHEBI:597326"/>
    </cofactor>
</comment>
<comment type="pathway">
    <text>Amino-acid biosynthesis; L-isoleucine biosynthesis; L-isoleucine from 2-oxobutanoate: step 4/4.</text>
</comment>
<comment type="pathway">
    <text>Amino-acid biosynthesis; L-leucine biosynthesis; L-leucine from 3-methyl-2-oxobutanoate: step 4/4.</text>
</comment>
<comment type="pathway">
    <text>Amino-acid biosynthesis; L-valine biosynthesis; L-valine from pyruvate: step 4/4.</text>
</comment>
<comment type="similarity">
    <text evidence="2">Belongs to the class-IV pyridoxal-phosphate-dependent aminotransferase family.</text>
</comment>
<proteinExistence type="inferred from homology"/>
<gene>
    <name type="primary">ilvE</name>
    <name type="ordered locus">slr0032</name>
</gene>
<dbReference type="EC" id="2.6.1.42"/>
<dbReference type="EMBL" id="BA000022">
    <property type="protein sequence ID" value="BAA10792.1"/>
    <property type="molecule type" value="Genomic_DNA"/>
</dbReference>
<dbReference type="PIR" id="S75945">
    <property type="entry name" value="S75945"/>
</dbReference>
<dbReference type="SMR" id="P54691"/>
<dbReference type="FunCoup" id="P54691">
    <property type="interactions" value="320"/>
</dbReference>
<dbReference type="STRING" id="1148.gene:10500296"/>
<dbReference type="PaxDb" id="1148-1001305"/>
<dbReference type="EnsemblBacteria" id="BAA10792">
    <property type="protein sequence ID" value="BAA10792"/>
    <property type="gene ID" value="BAA10792"/>
</dbReference>
<dbReference type="KEGG" id="syn:slr0032"/>
<dbReference type="eggNOG" id="COG0115">
    <property type="taxonomic scope" value="Bacteria"/>
</dbReference>
<dbReference type="InParanoid" id="P54691"/>
<dbReference type="PhylomeDB" id="P54691"/>
<dbReference type="BRENDA" id="2.6.1.42">
    <property type="organism ID" value="382"/>
</dbReference>
<dbReference type="BRENDA" id="2.6.1.79">
    <property type="organism ID" value="382"/>
</dbReference>
<dbReference type="UniPathway" id="UPA00047">
    <property type="reaction ID" value="UER00058"/>
</dbReference>
<dbReference type="UniPathway" id="UPA00048">
    <property type="reaction ID" value="UER00073"/>
</dbReference>
<dbReference type="UniPathway" id="UPA00049">
    <property type="reaction ID" value="UER00062"/>
</dbReference>
<dbReference type="Proteomes" id="UP000001425">
    <property type="component" value="Chromosome"/>
</dbReference>
<dbReference type="GO" id="GO:0052656">
    <property type="term" value="F:L-isoleucine-2-oxoglutarate transaminase activity"/>
    <property type="evidence" value="ECO:0007669"/>
    <property type="project" value="RHEA"/>
</dbReference>
<dbReference type="GO" id="GO:0052654">
    <property type="term" value="F:L-leucine-2-oxoglutarate transaminase activity"/>
    <property type="evidence" value="ECO:0007669"/>
    <property type="project" value="RHEA"/>
</dbReference>
<dbReference type="GO" id="GO:0052655">
    <property type="term" value="F:L-valine-2-oxoglutarate transaminase activity"/>
    <property type="evidence" value="ECO:0007669"/>
    <property type="project" value="RHEA"/>
</dbReference>
<dbReference type="GO" id="GO:0019752">
    <property type="term" value="P:carboxylic acid metabolic process"/>
    <property type="evidence" value="ECO:0000318"/>
    <property type="project" value="GO_Central"/>
</dbReference>
<dbReference type="GO" id="GO:0009097">
    <property type="term" value="P:isoleucine biosynthetic process"/>
    <property type="evidence" value="ECO:0007669"/>
    <property type="project" value="UniProtKB-UniPathway"/>
</dbReference>
<dbReference type="GO" id="GO:0009098">
    <property type="term" value="P:L-leucine biosynthetic process"/>
    <property type="evidence" value="ECO:0007669"/>
    <property type="project" value="UniProtKB-UniPathway"/>
</dbReference>
<dbReference type="GO" id="GO:0009099">
    <property type="term" value="P:L-valine biosynthetic process"/>
    <property type="evidence" value="ECO:0007669"/>
    <property type="project" value="UniProtKB-UniPathway"/>
</dbReference>
<dbReference type="CDD" id="cd01557">
    <property type="entry name" value="BCAT_beta_family"/>
    <property type="match status" value="1"/>
</dbReference>
<dbReference type="FunFam" id="3.20.10.10:FF:000002">
    <property type="entry name" value="D-alanine aminotransferase"/>
    <property type="match status" value="1"/>
</dbReference>
<dbReference type="Gene3D" id="3.30.470.10">
    <property type="match status" value="1"/>
</dbReference>
<dbReference type="Gene3D" id="3.20.10.10">
    <property type="entry name" value="D-amino Acid Aminotransferase, subunit A, domain 2"/>
    <property type="match status" value="1"/>
</dbReference>
<dbReference type="InterPro" id="IPR001544">
    <property type="entry name" value="Aminotrans_IV"/>
</dbReference>
<dbReference type="InterPro" id="IPR018300">
    <property type="entry name" value="Aminotrans_IV_CS"/>
</dbReference>
<dbReference type="InterPro" id="IPR036038">
    <property type="entry name" value="Aminotransferase-like"/>
</dbReference>
<dbReference type="InterPro" id="IPR005785">
    <property type="entry name" value="B_amino_transI"/>
</dbReference>
<dbReference type="InterPro" id="IPR043132">
    <property type="entry name" value="BCAT-like_C"/>
</dbReference>
<dbReference type="InterPro" id="IPR043131">
    <property type="entry name" value="BCAT-like_N"/>
</dbReference>
<dbReference type="InterPro" id="IPR033939">
    <property type="entry name" value="BCAT_family"/>
</dbReference>
<dbReference type="InterPro" id="IPR050571">
    <property type="entry name" value="Class-IV_PLP-Dep_Aminotrnsfr"/>
</dbReference>
<dbReference type="NCBIfam" id="TIGR01122">
    <property type="entry name" value="ilvE_I"/>
    <property type="match status" value="1"/>
</dbReference>
<dbReference type="NCBIfam" id="NF005146">
    <property type="entry name" value="PRK06606.1"/>
    <property type="match status" value="1"/>
</dbReference>
<dbReference type="PANTHER" id="PTHR42743">
    <property type="entry name" value="AMINO-ACID AMINOTRANSFERASE"/>
    <property type="match status" value="1"/>
</dbReference>
<dbReference type="PANTHER" id="PTHR42743:SF4">
    <property type="entry name" value="BRANCHED-CHAIN-AMINO-ACID AMINOTRANSFERASE-RELATED"/>
    <property type="match status" value="1"/>
</dbReference>
<dbReference type="Pfam" id="PF01063">
    <property type="entry name" value="Aminotran_4"/>
    <property type="match status" value="1"/>
</dbReference>
<dbReference type="SUPFAM" id="SSF56752">
    <property type="entry name" value="D-aminoacid aminotransferase-like PLP-dependent enzymes"/>
    <property type="match status" value="1"/>
</dbReference>
<dbReference type="PROSITE" id="PS00770">
    <property type="entry name" value="AA_TRANSFER_CLASS_4"/>
    <property type="match status" value="1"/>
</dbReference>